<protein>
    <recommendedName>
        <fullName evidence="1">Large ribosomal subunit protein uL2</fullName>
    </recommendedName>
    <alternativeName>
        <fullName evidence="3">50S ribosomal protein L2</fullName>
    </alternativeName>
</protein>
<organism>
    <name type="scientific">Pyrobaculum arsenaticum (strain DSM 13514 / JCM 11321 / PZ6)</name>
    <dbReference type="NCBI Taxonomy" id="340102"/>
    <lineage>
        <taxon>Archaea</taxon>
        <taxon>Thermoproteota</taxon>
        <taxon>Thermoprotei</taxon>
        <taxon>Thermoproteales</taxon>
        <taxon>Thermoproteaceae</taxon>
        <taxon>Pyrobaculum</taxon>
    </lineage>
</organism>
<comment type="function">
    <text evidence="1">One of the primary rRNA binding proteins. Required for association of the 30S and 50S subunits to form the 70S ribosome, for tRNA binding and peptide bond formation. It has been suggested to have peptidyltransferase activity; this is somewhat controversial. Makes several contacts with the 16S rRNA in the 70S ribosome.</text>
</comment>
<comment type="subunit">
    <text evidence="1">Part of the 50S ribosomal subunit. Forms a bridge to the 30S subunit in the 70S ribosome.</text>
</comment>
<comment type="similarity">
    <text evidence="1">Belongs to the universal ribosomal protein uL2 family.</text>
</comment>
<accession>A4WH02</accession>
<feature type="chain" id="PRO_0000310055" description="Large ribosomal subunit protein uL2">
    <location>
        <begin position="1"/>
        <end position="246"/>
    </location>
</feature>
<feature type="region of interest" description="Disordered" evidence="2">
    <location>
        <begin position="196"/>
        <end position="226"/>
    </location>
</feature>
<proteinExistence type="inferred from homology"/>
<dbReference type="EMBL" id="CP000660">
    <property type="protein sequence ID" value="ABP49669.1"/>
    <property type="molecule type" value="Genomic_DNA"/>
</dbReference>
<dbReference type="SMR" id="A4WH02"/>
<dbReference type="STRING" id="340102.Pars_0052"/>
<dbReference type="KEGG" id="pas:Pars_0052"/>
<dbReference type="HOGENOM" id="CLU_036235_0_3_2"/>
<dbReference type="OrthoDB" id="5987at2157"/>
<dbReference type="PhylomeDB" id="A4WH02"/>
<dbReference type="Proteomes" id="UP000001567">
    <property type="component" value="Chromosome"/>
</dbReference>
<dbReference type="GO" id="GO:0022625">
    <property type="term" value="C:cytosolic large ribosomal subunit"/>
    <property type="evidence" value="ECO:0007669"/>
    <property type="project" value="TreeGrafter"/>
</dbReference>
<dbReference type="GO" id="GO:0019843">
    <property type="term" value="F:rRNA binding"/>
    <property type="evidence" value="ECO:0007669"/>
    <property type="project" value="UniProtKB-UniRule"/>
</dbReference>
<dbReference type="GO" id="GO:0003735">
    <property type="term" value="F:structural constituent of ribosome"/>
    <property type="evidence" value="ECO:0007669"/>
    <property type="project" value="InterPro"/>
</dbReference>
<dbReference type="GO" id="GO:0002181">
    <property type="term" value="P:cytoplasmic translation"/>
    <property type="evidence" value="ECO:0007669"/>
    <property type="project" value="TreeGrafter"/>
</dbReference>
<dbReference type="FunFam" id="4.10.950.10:FF:000002">
    <property type="entry name" value="60S ribosomal protein L2"/>
    <property type="match status" value="1"/>
</dbReference>
<dbReference type="FunFam" id="2.30.30.30:FF:000006">
    <property type="entry name" value="60S ribosomal protein L8"/>
    <property type="match status" value="1"/>
</dbReference>
<dbReference type="Gene3D" id="2.30.30.30">
    <property type="match status" value="1"/>
</dbReference>
<dbReference type="Gene3D" id="2.40.50.140">
    <property type="entry name" value="Nucleic acid-binding proteins"/>
    <property type="match status" value="1"/>
</dbReference>
<dbReference type="Gene3D" id="4.10.950.10">
    <property type="entry name" value="Ribosomal protein L2, domain 3"/>
    <property type="match status" value="1"/>
</dbReference>
<dbReference type="HAMAP" id="MF_01320_A">
    <property type="entry name" value="Ribosomal_uL2_A"/>
    <property type="match status" value="1"/>
</dbReference>
<dbReference type="InterPro" id="IPR012340">
    <property type="entry name" value="NA-bd_OB-fold"/>
</dbReference>
<dbReference type="InterPro" id="IPR014722">
    <property type="entry name" value="Rib_uL2_dom2"/>
</dbReference>
<dbReference type="InterPro" id="IPR002171">
    <property type="entry name" value="Ribosomal_uL2"/>
</dbReference>
<dbReference type="InterPro" id="IPR023672">
    <property type="entry name" value="Ribosomal_uL2_arc_euk"/>
</dbReference>
<dbReference type="InterPro" id="IPR022669">
    <property type="entry name" value="Ribosomal_uL2_C"/>
</dbReference>
<dbReference type="InterPro" id="IPR014726">
    <property type="entry name" value="Ribosomal_uL2_dom3"/>
</dbReference>
<dbReference type="InterPro" id="IPR022666">
    <property type="entry name" value="Ribosomal_uL2_RNA-bd_dom"/>
</dbReference>
<dbReference type="InterPro" id="IPR008991">
    <property type="entry name" value="Translation_prot_SH3-like_sf"/>
</dbReference>
<dbReference type="NCBIfam" id="NF007180">
    <property type="entry name" value="PRK09612.1"/>
    <property type="match status" value="1"/>
</dbReference>
<dbReference type="PANTHER" id="PTHR13691:SF16">
    <property type="entry name" value="LARGE RIBOSOMAL SUBUNIT PROTEIN UL2"/>
    <property type="match status" value="1"/>
</dbReference>
<dbReference type="PANTHER" id="PTHR13691">
    <property type="entry name" value="RIBOSOMAL PROTEIN L2"/>
    <property type="match status" value="1"/>
</dbReference>
<dbReference type="Pfam" id="PF00181">
    <property type="entry name" value="Ribosomal_L2"/>
    <property type="match status" value="1"/>
</dbReference>
<dbReference type="Pfam" id="PF03947">
    <property type="entry name" value="Ribosomal_L2_C"/>
    <property type="match status" value="1"/>
</dbReference>
<dbReference type="PIRSF" id="PIRSF002158">
    <property type="entry name" value="Ribosomal_L2"/>
    <property type="match status" value="1"/>
</dbReference>
<dbReference type="SMART" id="SM01383">
    <property type="entry name" value="Ribosomal_L2"/>
    <property type="match status" value="1"/>
</dbReference>
<dbReference type="SMART" id="SM01382">
    <property type="entry name" value="Ribosomal_L2_C"/>
    <property type="match status" value="1"/>
</dbReference>
<dbReference type="SUPFAM" id="SSF50249">
    <property type="entry name" value="Nucleic acid-binding proteins"/>
    <property type="match status" value="1"/>
</dbReference>
<dbReference type="SUPFAM" id="SSF50104">
    <property type="entry name" value="Translation proteins SH3-like domain"/>
    <property type="match status" value="1"/>
</dbReference>
<reference key="1">
    <citation type="submission" date="2007-04" db="EMBL/GenBank/DDBJ databases">
        <title>Complete sequence of Pyrobaculum arsenaticum DSM 13514.</title>
        <authorList>
            <consortium name="US DOE Joint Genome Institute"/>
            <person name="Copeland A."/>
            <person name="Lucas S."/>
            <person name="Lapidus A."/>
            <person name="Barry K."/>
            <person name="Glavina del Rio T."/>
            <person name="Dalin E."/>
            <person name="Tice H."/>
            <person name="Pitluck S."/>
            <person name="Chain P."/>
            <person name="Malfatti S."/>
            <person name="Shin M."/>
            <person name="Vergez L."/>
            <person name="Schmutz J."/>
            <person name="Larimer F."/>
            <person name="Land M."/>
            <person name="Hauser L."/>
            <person name="Kyrpides N."/>
            <person name="Mikhailova N."/>
            <person name="Cozen A.E."/>
            <person name="Fitz-Gibbon S.T."/>
            <person name="House C.H."/>
            <person name="Saltikov C."/>
            <person name="Lowe T.M."/>
            <person name="Richardson P."/>
        </authorList>
    </citation>
    <scope>NUCLEOTIDE SEQUENCE [LARGE SCALE GENOMIC DNA]</scope>
    <source>
        <strain>ATCC 700994 / DSM 13514 / JCM 11321 / PZ6</strain>
    </source>
</reference>
<name>RL2_PYRAR</name>
<evidence type="ECO:0000255" key="1">
    <source>
        <dbReference type="HAMAP-Rule" id="MF_01320"/>
    </source>
</evidence>
<evidence type="ECO:0000256" key="2">
    <source>
        <dbReference type="SAM" id="MobiDB-lite"/>
    </source>
</evidence>
<evidence type="ECO:0000305" key="3"/>
<gene>
    <name evidence="1" type="primary">rpl2</name>
    <name type="ordered locus">Pars_0052</name>
</gene>
<keyword id="KW-0687">Ribonucleoprotein</keyword>
<keyword id="KW-0689">Ribosomal protein</keyword>
<keyword id="KW-0694">RNA-binding</keyword>
<keyword id="KW-0699">rRNA-binding</keyword>
<sequence length="246" mass="26319">MGKRILVQRRGRGGSQFRSPSWKRDGPVRYLPLEATSGRGYVVELLHEPGLNAPVARIVTESGAEFFNYAAEGLYVGQVIEMGSGATPKAGNIMILGEIPEGTMIFNVEKRAGDGGKYARSSGTYAVVVGQKPEENKTIIRLPSGRVIEVDARGRATVGIVAGGGRIEKPFLKAGKKYHRARAKAWKYPTVRGKAMSPYAHPHGGGSHQKGGTPVPKTAPPGQKVGFIGSRCTGRGCVRARAQQKQ</sequence>